<proteinExistence type="inferred from homology"/>
<reference key="1">
    <citation type="journal article" date="2009" name="PLoS Genet.">
        <title>Organised genome dynamics in the Escherichia coli species results in highly diverse adaptive paths.</title>
        <authorList>
            <person name="Touchon M."/>
            <person name="Hoede C."/>
            <person name="Tenaillon O."/>
            <person name="Barbe V."/>
            <person name="Baeriswyl S."/>
            <person name="Bidet P."/>
            <person name="Bingen E."/>
            <person name="Bonacorsi S."/>
            <person name="Bouchier C."/>
            <person name="Bouvet O."/>
            <person name="Calteau A."/>
            <person name="Chiapello H."/>
            <person name="Clermont O."/>
            <person name="Cruveiller S."/>
            <person name="Danchin A."/>
            <person name="Diard M."/>
            <person name="Dossat C."/>
            <person name="Karoui M.E."/>
            <person name="Frapy E."/>
            <person name="Garry L."/>
            <person name="Ghigo J.M."/>
            <person name="Gilles A.M."/>
            <person name="Johnson J."/>
            <person name="Le Bouguenec C."/>
            <person name="Lescat M."/>
            <person name="Mangenot S."/>
            <person name="Martinez-Jehanne V."/>
            <person name="Matic I."/>
            <person name="Nassif X."/>
            <person name="Oztas S."/>
            <person name="Petit M.A."/>
            <person name="Pichon C."/>
            <person name="Rouy Z."/>
            <person name="Ruf C.S."/>
            <person name="Schneider D."/>
            <person name="Tourret J."/>
            <person name="Vacherie B."/>
            <person name="Vallenet D."/>
            <person name="Medigue C."/>
            <person name="Rocha E.P.C."/>
            <person name="Denamur E."/>
        </authorList>
    </citation>
    <scope>NUCLEOTIDE SEQUENCE [LARGE SCALE GENOMIC DNA]</scope>
    <source>
        <strain>UMN026 / ExPEC</strain>
    </source>
</reference>
<organism>
    <name type="scientific">Escherichia coli O17:K52:H18 (strain UMN026 / ExPEC)</name>
    <dbReference type="NCBI Taxonomy" id="585056"/>
    <lineage>
        <taxon>Bacteria</taxon>
        <taxon>Pseudomonadati</taxon>
        <taxon>Pseudomonadota</taxon>
        <taxon>Gammaproteobacteria</taxon>
        <taxon>Enterobacterales</taxon>
        <taxon>Enterobacteriaceae</taxon>
        <taxon>Escherichia</taxon>
    </lineage>
</organism>
<gene>
    <name evidence="1" type="primary">sprT</name>
    <name type="ordered locus">ECUMN_3296</name>
</gene>
<sequence>MKTSRLPIAIQQAVMRRLREKLAQANLKLGRNYPEPKLSYTQRGTSAGTAWLESYEIRLNPVLLLENSEAFIEEVVPHELAHLLVWKHFGRVAPHGKEWKWMMESVLGVPARRTHQFELQSVRRNTFPYRCKCQEHQLTVRRHNRVVRGEAVYRCVHCGEQLVAK</sequence>
<accession>B7N7J7</accession>
<protein>
    <recommendedName>
        <fullName evidence="1">Protein SprT</fullName>
    </recommendedName>
</protein>
<evidence type="ECO:0000255" key="1">
    <source>
        <dbReference type="HAMAP-Rule" id="MF_00746"/>
    </source>
</evidence>
<name>SPRT_ECOLU</name>
<comment type="cofactor">
    <cofactor evidence="1">
        <name>Zn(2+)</name>
        <dbReference type="ChEBI" id="CHEBI:29105"/>
    </cofactor>
    <text evidence="1">Binds 1 zinc ion.</text>
</comment>
<comment type="subcellular location">
    <subcellularLocation>
        <location evidence="1">Cytoplasm</location>
    </subcellularLocation>
</comment>
<comment type="similarity">
    <text evidence="1">Belongs to the SprT family.</text>
</comment>
<keyword id="KW-0963">Cytoplasm</keyword>
<keyword id="KW-0479">Metal-binding</keyword>
<keyword id="KW-0862">Zinc</keyword>
<feature type="chain" id="PRO_1000133239" description="Protein SprT">
    <location>
        <begin position="1"/>
        <end position="165"/>
    </location>
</feature>
<feature type="domain" description="SprT-like" evidence="1">
    <location>
        <begin position="20"/>
        <end position="163"/>
    </location>
</feature>
<feature type="active site" evidence="1">
    <location>
        <position position="79"/>
    </location>
</feature>
<feature type="binding site" evidence="1">
    <location>
        <position position="78"/>
    </location>
    <ligand>
        <name>Zn(2+)</name>
        <dbReference type="ChEBI" id="CHEBI:29105"/>
    </ligand>
</feature>
<feature type="binding site" evidence="1">
    <location>
        <position position="82"/>
    </location>
    <ligand>
        <name>Zn(2+)</name>
        <dbReference type="ChEBI" id="CHEBI:29105"/>
    </ligand>
</feature>
<dbReference type="EMBL" id="CU928163">
    <property type="protein sequence ID" value="CAR14459.1"/>
    <property type="molecule type" value="Genomic_DNA"/>
</dbReference>
<dbReference type="RefSeq" id="WP_000858396.1">
    <property type="nucleotide sequence ID" value="NC_011751.1"/>
</dbReference>
<dbReference type="RefSeq" id="YP_002413978.1">
    <property type="nucleotide sequence ID" value="NC_011751.1"/>
</dbReference>
<dbReference type="SMR" id="B7N7J7"/>
<dbReference type="STRING" id="585056.ECUMN_3296"/>
<dbReference type="KEGG" id="eum:ECUMN_3296"/>
<dbReference type="PATRIC" id="fig|585056.7.peg.3474"/>
<dbReference type="HOGENOM" id="CLU_113336_0_1_6"/>
<dbReference type="Proteomes" id="UP000007097">
    <property type="component" value="Chromosome"/>
</dbReference>
<dbReference type="GO" id="GO:0005737">
    <property type="term" value="C:cytoplasm"/>
    <property type="evidence" value="ECO:0007669"/>
    <property type="project" value="UniProtKB-SubCell"/>
</dbReference>
<dbReference type="GO" id="GO:0008270">
    <property type="term" value="F:zinc ion binding"/>
    <property type="evidence" value="ECO:0007669"/>
    <property type="project" value="UniProtKB-UniRule"/>
</dbReference>
<dbReference type="GO" id="GO:0006950">
    <property type="term" value="P:response to stress"/>
    <property type="evidence" value="ECO:0007669"/>
    <property type="project" value="UniProtKB-ARBA"/>
</dbReference>
<dbReference type="Gene3D" id="3.30.2010.10">
    <property type="entry name" value="Metalloproteases ('zincins'), catalytic domain"/>
    <property type="match status" value="1"/>
</dbReference>
<dbReference type="HAMAP" id="MF_00746">
    <property type="entry name" value="SprT"/>
    <property type="match status" value="1"/>
</dbReference>
<dbReference type="InterPro" id="IPR006640">
    <property type="entry name" value="SprT-like_domain"/>
</dbReference>
<dbReference type="InterPro" id="IPR035240">
    <property type="entry name" value="SprT_Zn_ribbon"/>
</dbReference>
<dbReference type="InterPro" id="IPR023483">
    <property type="entry name" value="Uncharacterised_SprT"/>
</dbReference>
<dbReference type="NCBIfam" id="NF003421">
    <property type="entry name" value="PRK04860.1"/>
    <property type="match status" value="1"/>
</dbReference>
<dbReference type="PANTHER" id="PTHR38773">
    <property type="entry name" value="PROTEIN SPRT"/>
    <property type="match status" value="1"/>
</dbReference>
<dbReference type="PANTHER" id="PTHR38773:SF1">
    <property type="entry name" value="PROTEIN SPRT"/>
    <property type="match status" value="1"/>
</dbReference>
<dbReference type="Pfam" id="PF10263">
    <property type="entry name" value="SprT-like"/>
    <property type="match status" value="1"/>
</dbReference>
<dbReference type="Pfam" id="PF17283">
    <property type="entry name" value="Zn_ribbon_SprT"/>
    <property type="match status" value="1"/>
</dbReference>
<dbReference type="SMART" id="SM00731">
    <property type="entry name" value="SprT"/>
    <property type="match status" value="1"/>
</dbReference>
<dbReference type="PROSITE" id="PS00142">
    <property type="entry name" value="ZINC_PROTEASE"/>
    <property type="match status" value="1"/>
</dbReference>